<name>COX8B_ATEBE</name>
<reference key="1">
    <citation type="journal article" date="2003" name="Proc. Natl. Acad. Sci. U.S.A.">
        <title>Adaptive evolution of cytochrome c oxidase subunit VIII in anthropoid primates.</title>
        <authorList>
            <person name="Goldberg A."/>
            <person name="Wildman D.E."/>
            <person name="Schmidt T.R."/>
            <person name="Huttemann M."/>
            <person name="Goodman M."/>
            <person name="Weiss M.L."/>
            <person name="Grossman L.I."/>
        </authorList>
    </citation>
    <scope>NUCLEOTIDE SEQUENCE [MRNA]</scope>
</reference>
<organism>
    <name type="scientific">Ateles belzebuth</name>
    <name type="common">White-bellied spider monkey</name>
    <dbReference type="NCBI Taxonomy" id="9507"/>
    <lineage>
        <taxon>Eukaryota</taxon>
        <taxon>Metazoa</taxon>
        <taxon>Chordata</taxon>
        <taxon>Craniata</taxon>
        <taxon>Vertebrata</taxon>
        <taxon>Euteleostomi</taxon>
        <taxon>Mammalia</taxon>
        <taxon>Eutheria</taxon>
        <taxon>Euarchontoglires</taxon>
        <taxon>Primates</taxon>
        <taxon>Haplorrhini</taxon>
        <taxon>Platyrrhini</taxon>
        <taxon>Atelidae</taxon>
        <taxon>Atelinae</taxon>
        <taxon>Ateles</taxon>
    </lineage>
</organism>
<accession>Q863G0</accession>
<evidence type="ECO:0000250" key="1">
    <source>
        <dbReference type="UniProtKB" id="P10175"/>
    </source>
</evidence>
<evidence type="ECO:0000305" key="2"/>
<gene>
    <name type="primary">COX8B</name>
    <name type="synonym">COX8H</name>
</gene>
<comment type="function">
    <text evidence="1">Component of the cytochrome c oxidase, the last enzyme in the mitochondrial electron transport chain which drives oxidative phosphorylation. The respiratory chain contains 3 multisubunit complexes succinate dehydrogenase (complex II, CII), ubiquinol-cytochrome c oxidoreductase (cytochrome b-c1 complex, complex III, CIII) and cytochrome c oxidase (complex IV, CIV), that cooperate to transfer electrons derived from NADH and succinate to molecular oxygen, creating an electrochemical gradient over the inner membrane that drives transmembrane transport and the ATP synthase. Cytochrome c oxidase is the component of the respiratory chain that catalyzes the reduction of oxygen to water. Electrons originating from reduced cytochrome c in the intermembrane space (IMS) are transferred via the dinuclear copper A center (CU(A)) of subunit 2 and heme A of subunit 1 to the active site in subunit 1, a binuclear center (BNC) formed by heme A3 and copper B (CU(B)). The BNC reduces molecular oxygen to 2 water molecules using 4 electrons from cytochrome c in the IMS and 4 protons from the mitochondrial matrix.</text>
</comment>
<comment type="pathway">
    <text evidence="1">Energy metabolism; oxidative phosphorylation.</text>
</comment>
<comment type="subunit">
    <text evidence="1">Component of the cytochrome c oxidase (complex IV, CIV), a multisubunit enzyme composed of 14 subunits. The complex is composed of a catalytic core of 3 subunits MT-CO1, MT-CO2 and MT-CO3, encoded in the mitochondrial DNA, and 11 supernumerary subunits COX4I, COX5A, COX5B, COX6A, COX6B, COX6C, COX7A, COX7B, COX7C, COX8 and NDUFA4, which are encoded in the nuclear genome. The complex exists as a monomer or a dimer and forms supercomplexes (SCs) in the inner mitochondrial membrane with NADH-ubiquinone oxidoreductase (complex I, CI) and ubiquinol-cytochrome c oxidoreductase (cytochrome b-c1 complex, complex III, CIII), resulting in different assemblies (supercomplex SCI(1)III(2)IV(1) and megacomplex MCI(2)III(2)IV(2)).</text>
</comment>
<comment type="subcellular location">
    <subcellularLocation>
        <location evidence="1">Mitochondrion inner membrane</location>
        <topology evidence="1">Single-pass membrane protein</topology>
    </subcellularLocation>
</comment>
<comment type="similarity">
    <text evidence="2">Belongs to the cytochrome c oxidase VIII family.</text>
</comment>
<protein>
    <recommendedName>
        <fullName>Cytochrome c oxidase subunit 8B, mitochondrial</fullName>
    </recommendedName>
    <alternativeName>
        <fullName>Cytochrome c oxidase polypeptide VIII-heart</fullName>
    </alternativeName>
    <alternativeName>
        <fullName>Cytochrome c oxidase subunit 8-1</fullName>
    </alternativeName>
    <alternativeName>
        <fullName>Cytochrome c oxidase subunit 8H</fullName>
    </alternativeName>
</protein>
<sequence>MLSLRPALRLLQAPLRCWAVPKAHVSAKPAETPTSPAEQAVGLSFIFITFLGPAGWILSHVENYKKRPRA</sequence>
<feature type="transit peptide" description="Mitochondrion" evidence="1">
    <location>
        <begin position="1"/>
        <end position="24"/>
    </location>
</feature>
<feature type="chain" id="PRO_0000006175" description="Cytochrome c oxidase subunit 8B, mitochondrial">
    <location>
        <begin position="25"/>
        <end position="70"/>
    </location>
</feature>
<feature type="topological domain" description="Mitochondrial matrix" evidence="1">
    <location>
        <begin position="25"/>
        <end position="35"/>
    </location>
</feature>
<feature type="transmembrane region" description="Helical" evidence="1">
    <location>
        <begin position="36"/>
        <end position="59"/>
    </location>
</feature>
<feature type="topological domain" description="Mitochondrial intermembrane" evidence="1">
    <location>
        <begin position="60"/>
        <end position="70"/>
    </location>
</feature>
<dbReference type="EMBL" id="AY254826">
    <property type="protein sequence ID" value="AAP32257.1"/>
    <property type="molecule type" value="mRNA"/>
</dbReference>
<dbReference type="SMR" id="Q863G0"/>
<dbReference type="UniPathway" id="UPA00705"/>
<dbReference type="GO" id="GO:0005743">
    <property type="term" value="C:mitochondrial inner membrane"/>
    <property type="evidence" value="ECO:0007669"/>
    <property type="project" value="UniProtKB-SubCell"/>
</dbReference>
<dbReference type="GO" id="GO:0045277">
    <property type="term" value="C:respiratory chain complex IV"/>
    <property type="evidence" value="ECO:0007669"/>
    <property type="project" value="InterPro"/>
</dbReference>
<dbReference type="GO" id="GO:0006123">
    <property type="term" value="P:mitochondrial electron transport, cytochrome c to oxygen"/>
    <property type="evidence" value="ECO:0007669"/>
    <property type="project" value="InterPro"/>
</dbReference>
<dbReference type="CDD" id="cd00930">
    <property type="entry name" value="Cyt_c_Oxidase_VIII"/>
    <property type="match status" value="1"/>
</dbReference>
<dbReference type="FunFam" id="4.10.81.10:FF:000001">
    <property type="entry name" value="Cytochrome c oxidase subunit 8B, mitochondrial"/>
    <property type="match status" value="1"/>
</dbReference>
<dbReference type="Gene3D" id="4.10.81.10">
    <property type="entry name" value="Cytochrome c oxidase, subunit 8"/>
    <property type="match status" value="1"/>
</dbReference>
<dbReference type="InterPro" id="IPR003205">
    <property type="entry name" value="Cyt_c_oxidase_su8"/>
</dbReference>
<dbReference type="InterPro" id="IPR036548">
    <property type="entry name" value="Cyt_c_oxidase_su8_sf"/>
</dbReference>
<dbReference type="PANTHER" id="PTHR16717">
    <property type="entry name" value="CYTOCHROME C OXIDASE POLYPEPTIDE VIII"/>
    <property type="match status" value="1"/>
</dbReference>
<dbReference type="PANTHER" id="PTHR16717:SF4">
    <property type="entry name" value="CYTOCHROME C OXIDASE SUBUNIT 8B, MITOCHONDRIAL"/>
    <property type="match status" value="1"/>
</dbReference>
<dbReference type="Pfam" id="PF02285">
    <property type="entry name" value="COX8"/>
    <property type="match status" value="1"/>
</dbReference>
<dbReference type="SUPFAM" id="SSF81431">
    <property type="entry name" value="Mitochondrial cytochrome c oxidase subunit VIIIb (aka IX)"/>
    <property type="match status" value="1"/>
</dbReference>
<keyword id="KW-0472">Membrane</keyword>
<keyword id="KW-0496">Mitochondrion</keyword>
<keyword id="KW-0999">Mitochondrion inner membrane</keyword>
<keyword id="KW-0809">Transit peptide</keyword>
<keyword id="KW-0812">Transmembrane</keyword>
<keyword id="KW-1133">Transmembrane helix</keyword>
<proteinExistence type="inferred from homology"/>